<protein>
    <recommendedName>
        <fullName evidence="2">Septenin 1a</fullName>
    </recommendedName>
</protein>
<feature type="chain" id="PRO_0000453935" description="Septenin 1a">
    <location>
        <begin position="1"/>
        <end position="17"/>
    </location>
</feature>
<feature type="unsure residue" description="L or I" evidence="1">
    <location>
        <position position="11"/>
    </location>
</feature>
<proteinExistence type="evidence at protein level"/>
<reference key="1">
    <citation type="journal article" date="2021" name="Rapid Commun. Mass Spectrom.">
        <title>Manual mass spectrometry de novo sequencing of the anionic host defense peptides of the Cuban Treefrog Osteopilus septentrionalis.</title>
        <authorList>
            <person name="Samgina T.Y."/>
            <person name="Tolpina M.D."/>
            <person name="Surin A.K."/>
            <person name="Kovalev S.V."/>
            <person name="Bosch R.A."/>
            <person name="Alonso I.P."/>
            <person name="Garcia F.A."/>
            <person name="Gonzalez Lopez L.J."/>
            <person name="Lebedev A.T."/>
        </authorList>
    </citation>
    <scope>PROTEIN SEQUENCE</scope>
    <scope>MASS SPECTROMETRY</scope>
</reference>
<accession>C0HLW2</accession>
<comment type="function">
    <text evidence="2">May act as an antimicrobial peptide.</text>
</comment>
<comment type="subcellular location">
    <subcellularLocation>
        <location evidence="1">Secreted</location>
    </subcellularLocation>
</comment>
<comment type="tissue specificity">
    <text evidence="4">Expressed in skin glands.</text>
</comment>
<comment type="mass spectrometry" mass="1613.717" method="Electrospray" evidence="1"/>
<comment type="similarity">
    <text evidence="3">Belongs to the Frog skin active peptide (FSAP) family. Septenin subfamily.</text>
</comment>
<dbReference type="GO" id="GO:0005576">
    <property type="term" value="C:extracellular region"/>
    <property type="evidence" value="ECO:0007669"/>
    <property type="project" value="UniProtKB-SubCell"/>
</dbReference>
<evidence type="ECO:0000269" key="1">
    <source>
    </source>
</evidence>
<evidence type="ECO:0000303" key="2">
    <source>
    </source>
</evidence>
<evidence type="ECO:0000305" key="3"/>
<evidence type="ECO:0000305" key="4">
    <source>
    </source>
</evidence>
<organism>
    <name type="scientific">Osteopilus septentrionalis</name>
    <name type="common">Cuban treefrog</name>
    <dbReference type="NCBI Taxonomy" id="317373"/>
    <lineage>
        <taxon>Eukaryota</taxon>
        <taxon>Metazoa</taxon>
        <taxon>Chordata</taxon>
        <taxon>Craniata</taxon>
        <taxon>Vertebrata</taxon>
        <taxon>Euteleostomi</taxon>
        <taxon>Amphibia</taxon>
        <taxon>Batrachia</taxon>
        <taxon>Anura</taxon>
        <taxon>Neobatrachia</taxon>
        <taxon>Hyloidea</taxon>
        <taxon>Hylidae</taxon>
        <taxon>Hylinae</taxon>
        <taxon>Lophiohylini</taxon>
        <taxon>Osteopilus</taxon>
    </lineage>
</organism>
<name>SEP1A_OSTSE</name>
<sequence length="17" mass="1615">SDAVADGDHAISGVVDS</sequence>
<keyword id="KW-0903">Direct protein sequencing</keyword>
<keyword id="KW-0964">Secreted</keyword>